<dbReference type="EMBL" id="U90220">
    <property type="protein sequence ID" value="AAB63672.1"/>
    <property type="status" value="ALT_INIT"/>
    <property type="molecule type" value="Genomic_DNA"/>
</dbReference>
<dbReference type="EMBL" id="AE006469">
    <property type="protein sequence ID" value="AAK65595.2"/>
    <property type="molecule type" value="Genomic_DNA"/>
</dbReference>
<dbReference type="PIR" id="A95379">
    <property type="entry name" value="A95379"/>
</dbReference>
<dbReference type="RefSeq" id="NP_436183.2">
    <property type="nucleotide sequence ID" value="NC_003037.1"/>
</dbReference>
<dbReference type="EnsemblBacteria" id="AAK65595">
    <property type="protein sequence ID" value="AAK65595"/>
    <property type="gene ID" value="SMa1704"/>
</dbReference>
<dbReference type="KEGG" id="sme:SMa1704"/>
<dbReference type="PATRIC" id="fig|266834.11.peg.967"/>
<dbReference type="HOGENOM" id="CLU_045667_2_1_5"/>
<dbReference type="OrthoDB" id="5520804at2"/>
<dbReference type="Proteomes" id="UP000001976">
    <property type="component" value="Plasmid pSymA"/>
</dbReference>
<dbReference type="GO" id="GO:0005886">
    <property type="term" value="C:plasma membrane"/>
    <property type="evidence" value="ECO:0007669"/>
    <property type="project" value="UniProtKB-SubCell"/>
</dbReference>
<dbReference type="InterPro" id="IPR010640">
    <property type="entry name" value="Low_temperature_requirement_A"/>
</dbReference>
<dbReference type="PANTHER" id="PTHR36840">
    <property type="entry name" value="BLL5714 PROTEIN"/>
    <property type="match status" value="1"/>
</dbReference>
<dbReference type="PANTHER" id="PTHR36840:SF1">
    <property type="entry name" value="BLL5714 PROTEIN"/>
    <property type="match status" value="1"/>
</dbReference>
<dbReference type="Pfam" id="PF06772">
    <property type="entry name" value="LtrA"/>
    <property type="match status" value="1"/>
</dbReference>
<geneLocation type="plasmid">
    <name>pSymA</name>
    <name>megaplasmid 1</name>
</geneLocation>
<keyword id="KW-1003">Cell membrane</keyword>
<keyword id="KW-0472">Membrane</keyword>
<keyword id="KW-0614">Plasmid</keyword>
<keyword id="KW-1185">Reference proteome</keyword>
<keyword id="KW-0812">Transmembrane</keyword>
<keyword id="KW-1133">Transmembrane helix</keyword>
<name>Y4337_RHIME</name>
<feature type="chain" id="PRO_0000160647" description="Uncharacterized protein RA0937">
    <location>
        <begin position="1"/>
        <end position="409"/>
    </location>
</feature>
<feature type="transmembrane region" description="Helical" evidence="1">
    <location>
        <begin position="62"/>
        <end position="82"/>
    </location>
</feature>
<feature type="transmembrane region" description="Helical" evidence="1">
    <location>
        <begin position="100"/>
        <end position="120"/>
    </location>
</feature>
<feature type="transmembrane region" description="Helical" evidence="1">
    <location>
        <begin position="123"/>
        <end position="143"/>
    </location>
</feature>
<feature type="transmembrane region" description="Helical" evidence="1">
    <location>
        <begin position="152"/>
        <end position="172"/>
    </location>
</feature>
<feature type="transmembrane region" description="Helical" evidence="1">
    <location>
        <begin position="183"/>
        <end position="203"/>
    </location>
</feature>
<feature type="transmembrane region" description="Helical" evidence="1">
    <location>
        <begin position="252"/>
        <end position="272"/>
    </location>
</feature>
<feature type="transmembrane region" description="Helical" evidence="1">
    <location>
        <begin position="293"/>
        <end position="313"/>
    </location>
</feature>
<feature type="transmembrane region" description="Helical" evidence="1">
    <location>
        <begin position="328"/>
        <end position="348"/>
    </location>
</feature>
<feature type="transmembrane region" description="Helical" evidence="1">
    <location>
        <begin position="355"/>
        <end position="375"/>
    </location>
</feature>
<feature type="transmembrane region" description="Helical" evidence="1">
    <location>
        <begin position="376"/>
        <end position="396"/>
    </location>
</feature>
<comment type="subcellular location">
    <subcellularLocation>
        <location evidence="2">Cell membrane</location>
        <topology evidence="2">Multi-pass membrane protein</topology>
    </subcellularLocation>
</comment>
<comment type="sequence caution" evidence="2">
    <conflict type="erroneous initiation">
        <sequence resource="EMBL-CDS" id="AAB63672"/>
    </conflict>
</comment>
<gene>
    <name type="ordered locus">RA0937</name>
    <name type="ORF">SMa1704</name>
</gene>
<accession>O33683</accession>
<evidence type="ECO:0000255" key="1"/>
<evidence type="ECO:0000305" key="2"/>
<sequence>MSRESLYISACHPYEGSMAENHTHWLRKENTDQTKASFPELFFDLVFVFALIQLSESLSDDFSLGIAAEAVLFIFALWWVWIHTTWVMDLLDTEIEPVRLLLFTLMFFGIVMAIALPEAFKGMGLLFAVAYSAMQVSRSLFALYAFRRGDPASFMTFFRITAWLTISSTFWITGGLSEPHLRVVLWIVALVVEYTGPTVRYWVPLIGASPRETLDIDGEHLAERSALFVIIALGETILTIGKHTFSNLETEGTPWVLCFSFLTTVLMWWIYFHDGQQRAADKAEDTSKPQTTAQYLFTYGHLPIVGGIIFTAVGEDFSLAHPYQLGTYNFALAQLGGPILFLAGTMWMKRVSSRVLPYSHVFGISLLTASFTLVPFVANFAIQALTGVILLVVAVWEYVALKHLRRSAA</sequence>
<organism>
    <name type="scientific">Rhizobium meliloti (strain 1021)</name>
    <name type="common">Ensifer meliloti</name>
    <name type="synonym">Sinorhizobium meliloti</name>
    <dbReference type="NCBI Taxonomy" id="266834"/>
    <lineage>
        <taxon>Bacteria</taxon>
        <taxon>Pseudomonadati</taxon>
        <taxon>Pseudomonadota</taxon>
        <taxon>Alphaproteobacteria</taxon>
        <taxon>Hyphomicrobiales</taxon>
        <taxon>Rhizobiaceae</taxon>
        <taxon>Sinorhizobium/Ensifer group</taxon>
        <taxon>Sinorhizobium</taxon>
    </lineage>
</organism>
<proteinExistence type="predicted"/>
<reference key="1">
    <citation type="journal article" date="1997" name="Mol. Plant Microbe Interact.">
        <title>Identification and characterization of a gene on Rhizobium meliloti pSyma, syrB, that negatively affects syrM expression.</title>
        <authorList>
            <person name="Barnett M.J."/>
            <person name="Long S.R."/>
        </authorList>
    </citation>
    <scope>NUCLEOTIDE SEQUENCE [GENOMIC DNA]</scope>
    <source>
        <strain>1021</strain>
    </source>
</reference>
<reference key="2">
    <citation type="journal article" date="2001" name="Proc. Natl. Acad. Sci. U.S.A.">
        <title>Nucleotide sequence and predicted functions of the entire Sinorhizobium meliloti pSymA megaplasmid.</title>
        <authorList>
            <person name="Barnett M.J."/>
            <person name="Fisher R.F."/>
            <person name="Jones T."/>
            <person name="Komp C."/>
            <person name="Abola A.P."/>
            <person name="Barloy-Hubler F."/>
            <person name="Bowser L."/>
            <person name="Capela D."/>
            <person name="Galibert F."/>
            <person name="Gouzy J."/>
            <person name="Gurjal M."/>
            <person name="Hong A."/>
            <person name="Huizar L."/>
            <person name="Hyman R.W."/>
            <person name="Kahn D."/>
            <person name="Kahn M.L."/>
            <person name="Kalman S."/>
            <person name="Keating D.H."/>
            <person name="Palm C."/>
            <person name="Peck M.C."/>
            <person name="Surzycki R."/>
            <person name="Wells D.H."/>
            <person name="Yeh K.-C."/>
            <person name="Davis R.W."/>
            <person name="Federspiel N.A."/>
            <person name="Long S.R."/>
        </authorList>
    </citation>
    <scope>NUCLEOTIDE SEQUENCE [LARGE SCALE GENOMIC DNA]</scope>
    <source>
        <strain>1021</strain>
    </source>
</reference>
<reference key="3">
    <citation type="journal article" date="2001" name="Science">
        <title>The composite genome of the legume symbiont Sinorhizobium meliloti.</title>
        <authorList>
            <person name="Galibert F."/>
            <person name="Finan T.M."/>
            <person name="Long S.R."/>
            <person name="Puehler A."/>
            <person name="Abola P."/>
            <person name="Ampe F."/>
            <person name="Barloy-Hubler F."/>
            <person name="Barnett M.J."/>
            <person name="Becker A."/>
            <person name="Boistard P."/>
            <person name="Bothe G."/>
            <person name="Boutry M."/>
            <person name="Bowser L."/>
            <person name="Buhrmester J."/>
            <person name="Cadieu E."/>
            <person name="Capela D."/>
            <person name="Chain P."/>
            <person name="Cowie A."/>
            <person name="Davis R.W."/>
            <person name="Dreano S."/>
            <person name="Federspiel N.A."/>
            <person name="Fisher R.F."/>
            <person name="Gloux S."/>
            <person name="Godrie T."/>
            <person name="Goffeau A."/>
            <person name="Golding B."/>
            <person name="Gouzy J."/>
            <person name="Gurjal M."/>
            <person name="Hernandez-Lucas I."/>
            <person name="Hong A."/>
            <person name="Huizar L."/>
            <person name="Hyman R.W."/>
            <person name="Jones T."/>
            <person name="Kahn D."/>
            <person name="Kahn M.L."/>
            <person name="Kalman S."/>
            <person name="Keating D.H."/>
            <person name="Kiss E."/>
            <person name="Komp C."/>
            <person name="Lelaure V."/>
            <person name="Masuy D."/>
            <person name="Palm C."/>
            <person name="Peck M.C."/>
            <person name="Pohl T.M."/>
            <person name="Portetelle D."/>
            <person name="Purnelle B."/>
            <person name="Ramsperger U."/>
            <person name="Surzycki R."/>
            <person name="Thebault P."/>
            <person name="Vandenbol M."/>
            <person name="Vorhoelter F.J."/>
            <person name="Weidner S."/>
            <person name="Wells D.H."/>
            <person name="Wong K."/>
            <person name="Yeh K.-C."/>
            <person name="Batut J."/>
        </authorList>
    </citation>
    <scope>NUCLEOTIDE SEQUENCE [LARGE SCALE GENOMIC DNA]</scope>
    <source>
        <strain>1021</strain>
    </source>
</reference>
<protein>
    <recommendedName>
        <fullName>Uncharacterized protein RA0937</fullName>
    </recommendedName>
</protein>